<feature type="propeptide" id="PRO_0000015311" evidence="5">
    <location>
        <begin position="1"/>
        <end position="117"/>
    </location>
</feature>
<feature type="chain" id="PRO_0000015312" description="Interleukin-1 beta">
    <location>
        <begin position="118"/>
        <end position="269"/>
    </location>
</feature>
<feature type="site" description="Important for interaction with integrin" evidence="1">
    <location>
        <position position="172"/>
    </location>
</feature>
<feature type="site" description="Important for interaction with integrin" evidence="1">
    <location>
        <position position="180"/>
    </location>
</feature>
<feature type="site" description="Important for interaction with integrin" evidence="1">
    <location>
        <position position="182"/>
    </location>
</feature>
<feature type="site" description="Important for interaction with integrin" evidence="1">
    <location>
        <position position="191"/>
    </location>
</feature>
<feature type="site" description="Important for interaction with integrin" evidence="1">
    <location>
        <position position="205"/>
    </location>
</feature>
<feature type="strand" evidence="8">
    <location>
        <begin position="123"/>
        <end position="129"/>
    </location>
</feature>
<feature type="strand" evidence="8">
    <location>
        <begin position="134"/>
        <end position="138"/>
    </location>
</feature>
<feature type="turn" evidence="8">
    <location>
        <begin position="139"/>
        <end position="141"/>
    </location>
</feature>
<feature type="strand" evidence="8">
    <location>
        <begin position="142"/>
        <end position="146"/>
    </location>
</feature>
<feature type="helix" evidence="8">
    <location>
        <begin position="150"/>
        <end position="153"/>
    </location>
</feature>
<feature type="strand" evidence="8">
    <location>
        <begin position="159"/>
        <end position="163"/>
    </location>
</feature>
<feature type="strand" evidence="8">
    <location>
        <begin position="170"/>
        <end position="179"/>
    </location>
</feature>
<feature type="strand" evidence="8">
    <location>
        <begin position="182"/>
        <end position="191"/>
    </location>
</feature>
<feature type="strand" evidence="8">
    <location>
        <begin position="194"/>
        <end position="201"/>
    </location>
</feature>
<feature type="turn" evidence="8">
    <location>
        <begin position="204"/>
        <end position="206"/>
    </location>
</feature>
<feature type="helix" evidence="8">
    <location>
        <begin position="214"/>
        <end position="216"/>
    </location>
</feature>
<feature type="strand" evidence="8">
    <location>
        <begin position="217"/>
        <end position="223"/>
    </location>
</feature>
<feature type="strand" evidence="8">
    <location>
        <begin position="226"/>
        <end position="234"/>
    </location>
</feature>
<feature type="strand" evidence="8">
    <location>
        <begin position="238"/>
        <end position="241"/>
    </location>
</feature>
<feature type="strand" evidence="8">
    <location>
        <begin position="243"/>
        <end position="248"/>
    </location>
</feature>
<feature type="strand" evidence="8">
    <location>
        <begin position="250"/>
        <end position="252"/>
    </location>
</feature>
<feature type="strand" evidence="7">
    <location>
        <begin position="256"/>
        <end position="259"/>
    </location>
</feature>
<feature type="strand" evidence="8">
    <location>
        <begin position="262"/>
        <end position="266"/>
    </location>
</feature>
<evidence type="ECO:0000250" key="1">
    <source>
        <dbReference type="UniProtKB" id="P01584"/>
    </source>
</evidence>
<evidence type="ECO:0000269" key="2">
    <source>
    </source>
</evidence>
<evidence type="ECO:0000269" key="3">
    <source>
    </source>
</evidence>
<evidence type="ECO:0000269" key="4">
    <source>
    </source>
</evidence>
<evidence type="ECO:0000269" key="5">
    <source>
    </source>
</evidence>
<evidence type="ECO:0000305" key="6"/>
<evidence type="ECO:0007829" key="7">
    <source>
        <dbReference type="PDB" id="2MIB"/>
    </source>
</evidence>
<evidence type="ECO:0007829" key="8">
    <source>
        <dbReference type="PDB" id="8I1B"/>
    </source>
</evidence>
<sequence length="269" mass="30931">MATVPELNCEMPPFDSDENDLFFEVDGPQKMKGCFQTFDLGCPDESIQLQISQQHINKSFRQAVSLIVAVEKLWQLPVSFPWTFQDEDMSTFFSFIFEEEPILCDSWDDDDNLLVCDVPIRQLHYRLRDEQQKSLVLSDPYELKALHLNGQNINQQVIFSMSFVQGEPSNDKIPVALGLKGKNLYLSCVMKDGTPTLQLESVDPKQYPKKKMEKRFVFNKIEVKSKVEFESAEFPNWYISTSQAEHKPVFLGNNSGQDIIDFTMESVSS</sequence>
<organism>
    <name type="scientific">Mus musculus</name>
    <name type="common">Mouse</name>
    <dbReference type="NCBI Taxonomy" id="10090"/>
    <lineage>
        <taxon>Eukaryota</taxon>
        <taxon>Metazoa</taxon>
        <taxon>Chordata</taxon>
        <taxon>Craniata</taxon>
        <taxon>Vertebrata</taxon>
        <taxon>Euteleostomi</taxon>
        <taxon>Mammalia</taxon>
        <taxon>Eutheria</taxon>
        <taxon>Euarchontoglires</taxon>
        <taxon>Glires</taxon>
        <taxon>Rodentia</taxon>
        <taxon>Myomorpha</taxon>
        <taxon>Muroidea</taxon>
        <taxon>Muridae</taxon>
        <taxon>Murinae</taxon>
        <taxon>Mus</taxon>
        <taxon>Mus</taxon>
    </lineage>
</organism>
<dbReference type="EMBL" id="M15131">
    <property type="protein sequence ID" value="AAA39276.1"/>
    <property type="molecule type" value="mRNA"/>
</dbReference>
<dbReference type="EMBL" id="X04964">
    <property type="protein sequence ID" value="CAA28637.1"/>
    <property type="molecule type" value="Genomic_DNA"/>
</dbReference>
<dbReference type="EMBL" id="AY902319">
    <property type="protein sequence ID" value="AAX90604.1"/>
    <property type="molecule type" value="Genomic_DNA"/>
</dbReference>
<dbReference type="EMBL" id="CH466519">
    <property type="protein sequence ID" value="EDL28238.1"/>
    <property type="molecule type" value="Genomic_DNA"/>
</dbReference>
<dbReference type="EMBL" id="BC011437">
    <property type="protein sequence ID" value="AAH11437.1"/>
    <property type="molecule type" value="mRNA"/>
</dbReference>
<dbReference type="CCDS" id="CCDS16726.1"/>
<dbReference type="PIR" id="I55969">
    <property type="entry name" value="I55969"/>
</dbReference>
<dbReference type="RefSeq" id="NP_032387.1">
    <property type="nucleotide sequence ID" value="NM_008361.4"/>
</dbReference>
<dbReference type="PDB" id="2MIB">
    <property type="method" value="X-ray"/>
    <property type="resolution" value="2.84 A"/>
    <property type="chains" value="A=118-269"/>
</dbReference>
<dbReference type="PDB" id="8I1B">
    <property type="method" value="X-ray"/>
    <property type="resolution" value="2.40 A"/>
    <property type="chains" value="A=118-269"/>
</dbReference>
<dbReference type="PDBsum" id="2MIB"/>
<dbReference type="PDBsum" id="8I1B"/>
<dbReference type="SMR" id="P10749"/>
<dbReference type="BioGRID" id="200624">
    <property type="interactions" value="8"/>
</dbReference>
<dbReference type="CORUM" id="P10749"/>
<dbReference type="FunCoup" id="P10749">
    <property type="interactions" value="794"/>
</dbReference>
<dbReference type="IntAct" id="P10749">
    <property type="interactions" value="1"/>
</dbReference>
<dbReference type="STRING" id="10090.ENSMUSP00000028881"/>
<dbReference type="BindingDB" id="P10749"/>
<dbReference type="ChEMBL" id="CHEMBL5069361"/>
<dbReference type="iPTMnet" id="P10749"/>
<dbReference type="PhosphoSitePlus" id="P10749"/>
<dbReference type="PaxDb" id="10090-ENSMUSP00000028881"/>
<dbReference type="ProteomicsDB" id="266968"/>
<dbReference type="TopDownProteomics" id="P10749"/>
<dbReference type="ABCD" id="P10749">
    <property type="antibodies" value="1 sequenced antibody"/>
</dbReference>
<dbReference type="Antibodypedia" id="771">
    <property type="antibodies" value="2552 antibodies from 54 providers"/>
</dbReference>
<dbReference type="DNASU" id="16176"/>
<dbReference type="Ensembl" id="ENSMUST00000028881.14">
    <property type="protein sequence ID" value="ENSMUSP00000028881.8"/>
    <property type="gene ID" value="ENSMUSG00000027398.14"/>
</dbReference>
<dbReference type="GeneID" id="16176"/>
<dbReference type="KEGG" id="mmu:16176"/>
<dbReference type="UCSC" id="uc008mht.1">
    <property type="organism name" value="mouse"/>
</dbReference>
<dbReference type="AGR" id="MGI:96543"/>
<dbReference type="CTD" id="3553"/>
<dbReference type="MGI" id="MGI:96543">
    <property type="gene designation" value="Il1b"/>
</dbReference>
<dbReference type="VEuPathDB" id="HostDB:ENSMUSG00000027398"/>
<dbReference type="eggNOG" id="ENOG502S3E9">
    <property type="taxonomic scope" value="Eukaryota"/>
</dbReference>
<dbReference type="GeneTree" id="ENSGT00950000182943"/>
<dbReference type="HOGENOM" id="CLU_083639_0_0_1"/>
<dbReference type="InParanoid" id="P10749"/>
<dbReference type="OMA" id="QKCLVMS"/>
<dbReference type="OrthoDB" id="9449069at2759"/>
<dbReference type="PhylomeDB" id="P10749"/>
<dbReference type="TreeFam" id="TF300203"/>
<dbReference type="Reactome" id="R-MMU-448706">
    <property type="pathway name" value="Interleukin-1 processing"/>
</dbReference>
<dbReference type="Reactome" id="R-MMU-5620971">
    <property type="pathway name" value="Pyroptosis"/>
</dbReference>
<dbReference type="Reactome" id="R-MMU-5660668">
    <property type="pathway name" value="CLEC7A/inflammasome pathway"/>
</dbReference>
<dbReference type="Reactome" id="R-MMU-9020702">
    <property type="pathway name" value="Interleukin-1 signaling"/>
</dbReference>
<dbReference type="BioGRID-ORCS" id="16176">
    <property type="hits" value="1 hit in 79 CRISPR screens"/>
</dbReference>
<dbReference type="ChiTaRS" id="Il1b">
    <property type="organism name" value="mouse"/>
</dbReference>
<dbReference type="EvolutionaryTrace" id="P10749"/>
<dbReference type="PRO" id="PR:P10749"/>
<dbReference type="Proteomes" id="UP000000589">
    <property type="component" value="Chromosome 2"/>
</dbReference>
<dbReference type="RNAct" id="P10749">
    <property type="molecule type" value="protein"/>
</dbReference>
<dbReference type="Bgee" id="ENSMUSG00000027398">
    <property type="expression patterns" value="Expressed in granulocyte and 65 other cell types or tissues"/>
</dbReference>
<dbReference type="GO" id="GO:0005829">
    <property type="term" value="C:cytosol"/>
    <property type="evidence" value="ECO:0007669"/>
    <property type="project" value="UniProtKB-SubCell"/>
</dbReference>
<dbReference type="GO" id="GO:0005615">
    <property type="term" value="C:extracellular space"/>
    <property type="evidence" value="ECO:0000314"/>
    <property type="project" value="CAFA"/>
</dbReference>
<dbReference type="GO" id="GO:0005764">
    <property type="term" value="C:lysosome"/>
    <property type="evidence" value="ECO:0007669"/>
    <property type="project" value="UniProtKB-SubCell"/>
</dbReference>
<dbReference type="GO" id="GO:0030141">
    <property type="term" value="C:secretory granule"/>
    <property type="evidence" value="ECO:0000314"/>
    <property type="project" value="MGI"/>
</dbReference>
<dbReference type="GO" id="GO:0031982">
    <property type="term" value="C:vesicle"/>
    <property type="evidence" value="ECO:0000314"/>
    <property type="project" value="MGI"/>
</dbReference>
<dbReference type="GO" id="GO:0005125">
    <property type="term" value="F:cytokine activity"/>
    <property type="evidence" value="ECO:0000314"/>
    <property type="project" value="MGI"/>
</dbReference>
<dbReference type="GO" id="GO:0005178">
    <property type="term" value="F:integrin binding"/>
    <property type="evidence" value="ECO:0000250"/>
    <property type="project" value="UniProtKB"/>
</dbReference>
<dbReference type="GO" id="GO:0005149">
    <property type="term" value="F:interleukin-1 receptor binding"/>
    <property type="evidence" value="ECO:0007669"/>
    <property type="project" value="InterPro"/>
</dbReference>
<dbReference type="GO" id="GO:0019904">
    <property type="term" value="F:protein domain specific binding"/>
    <property type="evidence" value="ECO:0007669"/>
    <property type="project" value="Ensembl"/>
</dbReference>
<dbReference type="GO" id="GO:0048018">
    <property type="term" value="F:receptor ligand activity"/>
    <property type="evidence" value="ECO:0000314"/>
    <property type="project" value="MGI"/>
</dbReference>
<dbReference type="GO" id="GO:0048143">
    <property type="term" value="P:astrocyte activation"/>
    <property type="evidence" value="ECO:0000314"/>
    <property type="project" value="MGI"/>
</dbReference>
<dbReference type="GO" id="GO:0097398">
    <property type="term" value="P:cellular response to interleukin-17"/>
    <property type="evidence" value="ECO:0000314"/>
    <property type="project" value="MGI"/>
</dbReference>
<dbReference type="GO" id="GO:0071260">
    <property type="term" value="P:cellular response to mechanical stimulus"/>
    <property type="evidence" value="ECO:0007669"/>
    <property type="project" value="Ensembl"/>
</dbReference>
<dbReference type="GO" id="GO:0071466">
    <property type="term" value="P:cellular response to xenobiotic stimulus"/>
    <property type="evidence" value="ECO:0000266"/>
    <property type="project" value="MGI"/>
</dbReference>
<dbReference type="GO" id="GO:0050830">
    <property type="term" value="P:defense response to Gram-positive bacterium"/>
    <property type="evidence" value="ECO:0007669"/>
    <property type="project" value="Ensembl"/>
</dbReference>
<dbReference type="GO" id="GO:0035234">
    <property type="term" value="P:ectopic germ cell programmed cell death"/>
    <property type="evidence" value="ECO:0000316"/>
    <property type="project" value="MGI"/>
</dbReference>
<dbReference type="GO" id="GO:0097192">
    <property type="term" value="P:extrinsic apoptotic signaling pathway in absence of ligand"/>
    <property type="evidence" value="ECO:0000315"/>
    <property type="project" value="MGI"/>
</dbReference>
<dbReference type="GO" id="GO:0001660">
    <property type="term" value="P:fever generation"/>
    <property type="evidence" value="ECO:0007669"/>
    <property type="project" value="UniProtKB-KW"/>
</dbReference>
<dbReference type="GO" id="GO:0030213">
    <property type="term" value="P:hyaluronan biosynthetic process"/>
    <property type="evidence" value="ECO:0007669"/>
    <property type="project" value="Ensembl"/>
</dbReference>
<dbReference type="GO" id="GO:0006955">
    <property type="term" value="P:immune response"/>
    <property type="evidence" value="ECO:0007669"/>
    <property type="project" value="InterPro"/>
</dbReference>
<dbReference type="GO" id="GO:0070498">
    <property type="term" value="P:interleukin-1-mediated signaling pathway"/>
    <property type="evidence" value="ECO:0000314"/>
    <property type="project" value="BHF-UCL"/>
</dbReference>
<dbReference type="GO" id="GO:0007254">
    <property type="term" value="P:JNK cascade"/>
    <property type="evidence" value="ECO:0000314"/>
    <property type="project" value="MGI"/>
</dbReference>
<dbReference type="GO" id="GO:0050900">
    <property type="term" value="P:leukocyte migration"/>
    <property type="evidence" value="ECO:0000314"/>
    <property type="project" value="MGI"/>
</dbReference>
<dbReference type="GO" id="GO:0070487">
    <property type="term" value="P:monocyte aggregation"/>
    <property type="evidence" value="ECO:0007669"/>
    <property type="project" value="Ensembl"/>
</dbReference>
<dbReference type="GO" id="GO:0070164">
    <property type="term" value="P:negative regulation of adiponectin secretion"/>
    <property type="evidence" value="ECO:0000314"/>
    <property type="project" value="BHF-UCL"/>
</dbReference>
<dbReference type="GO" id="GO:0008285">
    <property type="term" value="P:negative regulation of cell population proliferation"/>
    <property type="evidence" value="ECO:0007669"/>
    <property type="project" value="Ensembl"/>
</dbReference>
<dbReference type="GO" id="GO:0010829">
    <property type="term" value="P:negative regulation of D-glucose transmembrane transport"/>
    <property type="evidence" value="ECO:0000314"/>
    <property type="project" value="BHF-UCL"/>
</dbReference>
<dbReference type="GO" id="GO:2001240">
    <property type="term" value="P:negative regulation of extrinsic apoptotic signaling pathway in absence of ligand"/>
    <property type="evidence" value="ECO:0007669"/>
    <property type="project" value="Ensembl"/>
</dbReference>
<dbReference type="GO" id="GO:1903597">
    <property type="term" value="P:negative regulation of gap junction assembly"/>
    <property type="evidence" value="ECO:0007669"/>
    <property type="project" value="Ensembl"/>
</dbReference>
<dbReference type="GO" id="GO:0046627">
    <property type="term" value="P:negative regulation of insulin receptor signaling pathway"/>
    <property type="evidence" value="ECO:0000314"/>
    <property type="project" value="BHF-UCL"/>
</dbReference>
<dbReference type="GO" id="GO:0050995">
    <property type="term" value="P:negative regulation of lipid catabolic process"/>
    <property type="evidence" value="ECO:0007669"/>
    <property type="project" value="Ensembl"/>
</dbReference>
<dbReference type="GO" id="GO:0045833">
    <property type="term" value="P:negative regulation of lipid metabolic process"/>
    <property type="evidence" value="ECO:0000314"/>
    <property type="project" value="BHF-UCL"/>
</dbReference>
<dbReference type="GO" id="GO:0043409">
    <property type="term" value="P:negative regulation of MAPK cascade"/>
    <property type="evidence" value="ECO:0000314"/>
    <property type="project" value="BHF-UCL"/>
</dbReference>
<dbReference type="GO" id="GO:0050805">
    <property type="term" value="P:negative regulation of synaptic transmission"/>
    <property type="evidence" value="ECO:0000315"/>
    <property type="project" value="ARUK-UCL"/>
</dbReference>
<dbReference type="GO" id="GO:0030593">
    <property type="term" value="P:neutrophil chemotaxis"/>
    <property type="evidence" value="ECO:0000314"/>
    <property type="project" value="MGI"/>
</dbReference>
<dbReference type="GO" id="GO:0045766">
    <property type="term" value="P:positive regulation of angiogenesis"/>
    <property type="evidence" value="ECO:0000315"/>
    <property type="project" value="BHF-UCL"/>
</dbReference>
<dbReference type="GO" id="GO:0043123">
    <property type="term" value="P:positive regulation of canonical NF-kappaB signal transduction"/>
    <property type="evidence" value="ECO:0000314"/>
    <property type="project" value="MGI"/>
</dbReference>
<dbReference type="GO" id="GO:0051781">
    <property type="term" value="P:positive regulation of cell division"/>
    <property type="evidence" value="ECO:0007669"/>
    <property type="project" value="UniProtKB-KW"/>
</dbReference>
<dbReference type="GO" id="GO:0030335">
    <property type="term" value="P:positive regulation of cell migration"/>
    <property type="evidence" value="ECO:0007669"/>
    <property type="project" value="Ensembl"/>
</dbReference>
<dbReference type="GO" id="GO:0032722">
    <property type="term" value="P:positive regulation of chemokine production"/>
    <property type="evidence" value="ECO:0000314"/>
    <property type="project" value="MGI"/>
</dbReference>
<dbReference type="GO" id="GO:0045917">
    <property type="term" value="P:positive regulation of complement activation"/>
    <property type="evidence" value="ECO:0007669"/>
    <property type="project" value="Ensembl"/>
</dbReference>
<dbReference type="GO" id="GO:0010718">
    <property type="term" value="P:positive regulation of epithelial to mesenchymal transition"/>
    <property type="evidence" value="ECO:0007669"/>
    <property type="project" value="Ensembl"/>
</dbReference>
<dbReference type="GO" id="GO:0070374">
    <property type="term" value="P:positive regulation of ERK1 and ERK2 cascade"/>
    <property type="evidence" value="ECO:0007669"/>
    <property type="project" value="Ensembl"/>
</dbReference>
<dbReference type="GO" id="GO:0031622">
    <property type="term" value="P:positive regulation of fever generation"/>
    <property type="evidence" value="ECO:0000314"/>
    <property type="project" value="BHF-UCL"/>
</dbReference>
<dbReference type="GO" id="GO:0010628">
    <property type="term" value="P:positive regulation of gene expression"/>
    <property type="evidence" value="ECO:0000314"/>
    <property type="project" value="MGI"/>
</dbReference>
<dbReference type="GO" id="GO:0060252">
    <property type="term" value="P:positive regulation of glial cell proliferation"/>
    <property type="evidence" value="ECO:0007669"/>
    <property type="project" value="Ensembl"/>
</dbReference>
<dbReference type="GO" id="GO:0032725">
    <property type="term" value="P:positive regulation of granulocyte macrophage colony-stimulating factor production"/>
    <property type="evidence" value="ECO:0007669"/>
    <property type="project" value="Ensembl"/>
</dbReference>
<dbReference type="GO" id="GO:0034116">
    <property type="term" value="P:positive regulation of heterotypic cell-cell adhesion"/>
    <property type="evidence" value="ECO:0007669"/>
    <property type="project" value="Ensembl"/>
</dbReference>
<dbReference type="GO" id="GO:0032743">
    <property type="term" value="P:positive regulation of interleukin-2 production"/>
    <property type="evidence" value="ECO:0007669"/>
    <property type="project" value="Ensembl"/>
</dbReference>
<dbReference type="GO" id="GO:0032755">
    <property type="term" value="P:positive regulation of interleukin-6 production"/>
    <property type="evidence" value="ECO:0000314"/>
    <property type="project" value="UniProtKB"/>
</dbReference>
<dbReference type="GO" id="GO:0032757">
    <property type="term" value="P:positive regulation of interleukin-8 production"/>
    <property type="evidence" value="ECO:0007669"/>
    <property type="project" value="Ensembl"/>
</dbReference>
<dbReference type="GO" id="GO:0046330">
    <property type="term" value="P:positive regulation of JNK cascade"/>
    <property type="evidence" value="ECO:0000314"/>
    <property type="project" value="MGI"/>
</dbReference>
<dbReference type="GO" id="GO:0050996">
    <property type="term" value="P:positive regulation of lipid catabolic process"/>
    <property type="evidence" value="ECO:0000314"/>
    <property type="project" value="BHF-UCL"/>
</dbReference>
<dbReference type="GO" id="GO:0010744">
    <property type="term" value="P:positive regulation of macrophage derived foam cell differentiation"/>
    <property type="evidence" value="ECO:0007669"/>
    <property type="project" value="Ensembl"/>
</dbReference>
<dbReference type="GO" id="GO:0051044">
    <property type="term" value="P:positive regulation of membrane protein ectodomain proteolysis"/>
    <property type="evidence" value="ECO:0007669"/>
    <property type="project" value="Ensembl"/>
</dbReference>
<dbReference type="GO" id="GO:0045840">
    <property type="term" value="P:positive regulation of mitotic nuclear division"/>
    <property type="evidence" value="ECO:0007669"/>
    <property type="project" value="Ensembl"/>
</dbReference>
<dbReference type="GO" id="GO:0071639">
    <property type="term" value="P:positive regulation of monocyte chemotactic protein-1 production"/>
    <property type="evidence" value="ECO:0007669"/>
    <property type="project" value="Ensembl"/>
</dbReference>
<dbReference type="GO" id="GO:0045429">
    <property type="term" value="P:positive regulation of nitric oxide biosynthetic process"/>
    <property type="evidence" value="ECO:0007669"/>
    <property type="project" value="Ensembl"/>
</dbReference>
<dbReference type="GO" id="GO:1901224">
    <property type="term" value="P:positive regulation of non-canonical NF-kappaB signal transduction"/>
    <property type="evidence" value="ECO:0007669"/>
    <property type="project" value="Ensembl"/>
</dbReference>
<dbReference type="GO" id="GO:1900745">
    <property type="term" value="P:positive regulation of p38MAPK cascade"/>
    <property type="evidence" value="ECO:0000316"/>
    <property type="project" value="ARUK-UCL"/>
</dbReference>
<dbReference type="GO" id="GO:0051897">
    <property type="term" value="P:positive regulation of phosphatidylinositol 3-kinase/protein kinase B signal transduction"/>
    <property type="evidence" value="ECO:0007669"/>
    <property type="project" value="Ensembl"/>
</dbReference>
<dbReference type="GO" id="GO:0010641">
    <property type="term" value="P:positive regulation of platelet-derived growth factor receptor signaling pathway"/>
    <property type="evidence" value="ECO:0007669"/>
    <property type="project" value="Ensembl"/>
</dbReference>
<dbReference type="GO" id="GO:0031394">
    <property type="term" value="P:positive regulation of prostaglandin biosynthetic process"/>
    <property type="evidence" value="ECO:0007669"/>
    <property type="project" value="Ensembl"/>
</dbReference>
<dbReference type="GO" id="GO:0032308">
    <property type="term" value="P:positive regulation of prostaglandin secretion"/>
    <property type="evidence" value="ECO:0000314"/>
    <property type="project" value="BHF-UCL"/>
</dbReference>
<dbReference type="GO" id="GO:0042102">
    <property type="term" value="P:positive regulation of T cell proliferation"/>
    <property type="evidence" value="ECO:0007669"/>
    <property type="project" value="Ensembl"/>
</dbReference>
<dbReference type="GO" id="GO:2000556">
    <property type="term" value="P:positive regulation of T-helper 1 cell cytokine production"/>
    <property type="evidence" value="ECO:0000250"/>
    <property type="project" value="UniProtKB"/>
</dbReference>
<dbReference type="GO" id="GO:1905075">
    <property type="term" value="P:positive regulation of tight junction disassembly"/>
    <property type="evidence" value="ECO:0007669"/>
    <property type="project" value="Ensembl"/>
</dbReference>
<dbReference type="GO" id="GO:0045944">
    <property type="term" value="P:positive regulation of transcription by RNA polymerase II"/>
    <property type="evidence" value="ECO:0000314"/>
    <property type="project" value="MGI"/>
</dbReference>
<dbReference type="GO" id="GO:0032729">
    <property type="term" value="P:positive regulation of type II interferon production"/>
    <property type="evidence" value="ECO:0000250"/>
    <property type="project" value="UniProtKB"/>
</dbReference>
<dbReference type="GO" id="GO:0010575">
    <property type="term" value="P:positive regulation of vascular endothelial growth factor production"/>
    <property type="evidence" value="ECO:0000315"/>
    <property type="project" value="BHF-UCL"/>
</dbReference>
<dbReference type="GO" id="GO:0050691">
    <property type="term" value="P:regulation of defense response to virus by host"/>
    <property type="evidence" value="ECO:0000314"/>
    <property type="project" value="CAFA"/>
</dbReference>
<dbReference type="GO" id="GO:1903140">
    <property type="term" value="P:regulation of establishment of endothelial barrier"/>
    <property type="evidence" value="ECO:0007669"/>
    <property type="project" value="Ensembl"/>
</dbReference>
<dbReference type="GO" id="GO:0050796">
    <property type="term" value="P:regulation of insulin secretion"/>
    <property type="evidence" value="ECO:0007669"/>
    <property type="project" value="Ensembl"/>
</dbReference>
<dbReference type="GO" id="GO:0050999">
    <property type="term" value="P:regulation of nitric-oxide synthase activity"/>
    <property type="evidence" value="ECO:0000314"/>
    <property type="project" value="UniProtKB"/>
</dbReference>
<dbReference type="GO" id="GO:0033198">
    <property type="term" value="P:response to ATP"/>
    <property type="evidence" value="ECO:0000314"/>
    <property type="project" value="MGI"/>
</dbReference>
<dbReference type="GO" id="GO:0009743">
    <property type="term" value="P:response to carbohydrate"/>
    <property type="evidence" value="ECO:0000314"/>
    <property type="project" value="MGI"/>
</dbReference>
<dbReference type="GO" id="GO:0032496">
    <property type="term" value="P:response to lipopolysaccharide"/>
    <property type="evidence" value="ECO:0000314"/>
    <property type="project" value="MGI"/>
</dbReference>
<dbReference type="GO" id="GO:0010573">
    <property type="term" value="P:vascular endothelial growth factor production"/>
    <property type="evidence" value="ECO:0000250"/>
    <property type="project" value="UniProtKB"/>
</dbReference>
<dbReference type="CDD" id="cd23296">
    <property type="entry name" value="beta-trefoil_IL1B"/>
    <property type="match status" value="1"/>
</dbReference>
<dbReference type="FunFam" id="2.80.10.50:FF:000027">
    <property type="entry name" value="Interleukin-1 beta"/>
    <property type="match status" value="1"/>
</dbReference>
<dbReference type="Gene3D" id="2.80.10.50">
    <property type="match status" value="1"/>
</dbReference>
<dbReference type="InterPro" id="IPR020877">
    <property type="entry name" value="IL-1_CS"/>
</dbReference>
<dbReference type="InterPro" id="IPR000975">
    <property type="entry name" value="IL-1_fam"/>
</dbReference>
<dbReference type="InterPro" id="IPR003502">
    <property type="entry name" value="IL-1_propep"/>
</dbReference>
<dbReference type="InterPro" id="IPR008996">
    <property type="entry name" value="IL1/FGF"/>
</dbReference>
<dbReference type="PANTHER" id="PTHR10078:SF30">
    <property type="entry name" value="INTERLEUKIN-1 BETA"/>
    <property type="match status" value="1"/>
</dbReference>
<dbReference type="PANTHER" id="PTHR10078">
    <property type="entry name" value="INTERLEUKIN-1 FAMILY MEMBER"/>
    <property type="match status" value="1"/>
</dbReference>
<dbReference type="Pfam" id="PF00340">
    <property type="entry name" value="IL1"/>
    <property type="match status" value="1"/>
</dbReference>
<dbReference type="Pfam" id="PF02394">
    <property type="entry name" value="IL1_propep"/>
    <property type="match status" value="1"/>
</dbReference>
<dbReference type="PRINTS" id="PR00262">
    <property type="entry name" value="IL1HBGF"/>
</dbReference>
<dbReference type="PRINTS" id="PR00264">
    <property type="entry name" value="INTERLEUKIN1"/>
</dbReference>
<dbReference type="PRINTS" id="PR01359">
    <property type="entry name" value="INTRLEUKIN1B"/>
</dbReference>
<dbReference type="PRINTS" id="PR01357">
    <property type="entry name" value="INTRLEUKN1AB"/>
</dbReference>
<dbReference type="SMART" id="SM00125">
    <property type="entry name" value="IL1"/>
    <property type="match status" value="1"/>
</dbReference>
<dbReference type="SUPFAM" id="SSF50353">
    <property type="entry name" value="Cytokine"/>
    <property type="match status" value="1"/>
</dbReference>
<dbReference type="PROSITE" id="PS00253">
    <property type="entry name" value="INTERLEUKIN_1"/>
    <property type="match status" value="1"/>
</dbReference>
<keyword id="KW-0002">3D-structure</keyword>
<keyword id="KW-0202">Cytokine</keyword>
<keyword id="KW-0963">Cytoplasm</keyword>
<keyword id="KW-0903">Direct protein sequencing</keyword>
<keyword id="KW-0395">Inflammatory response</keyword>
<keyword id="KW-0458">Lysosome</keyword>
<keyword id="KW-0497">Mitogen</keyword>
<keyword id="KW-0666">Pyrogen</keyword>
<keyword id="KW-1185">Reference proteome</keyword>
<keyword id="KW-0964">Secreted</keyword>
<protein>
    <recommendedName>
        <fullName>Interleukin-1 beta</fullName>
        <shortName>IL-1 beta</shortName>
    </recommendedName>
</protein>
<name>IL1B_MOUSE</name>
<reference key="1">
    <citation type="journal article" date="1986" name="J. Immunol.">
        <title>Two interleukin 1 genes in the mouse: cloning and expression of the cDNA for murine interleukin 1 beta.</title>
        <authorList>
            <person name="Gray P.W."/>
            <person name="Glaister D."/>
            <person name="Chen E."/>
            <person name="Goeddel D.V."/>
            <person name="Pennica D."/>
        </authorList>
    </citation>
    <scope>NUCLEOTIDE SEQUENCE [MRNA]</scope>
</reference>
<reference key="2">
    <citation type="journal article" date="1986" name="Nucleic Acids Res.">
        <title>The murine interleukin 1 beta gene: structure and evolution.</title>
        <authorList>
            <person name="Telford J.L."/>
            <person name="Macchia G."/>
            <person name="Massone A."/>
            <person name="Carinci V."/>
            <person name="Palla E."/>
            <person name="Melli M."/>
        </authorList>
    </citation>
    <scope>NUCLEOTIDE SEQUENCE [GENOMIC DNA]</scope>
</reference>
<reference key="3">
    <citation type="submission" date="2005-01" db="EMBL/GenBank/DDBJ databases">
        <title>Characterization of quantitative trait loci influencing growth and adiposity using congenic mouse strains.</title>
        <authorList>
            <person name="Farber C.R."/>
            <person name="Corva P.M."/>
            <person name="Medrano J.F."/>
        </authorList>
    </citation>
    <scope>NUCLEOTIDE SEQUENCE [GENOMIC DNA]</scope>
    <source>
        <strain>CAST/EiJ</strain>
        <tissue>Spleen</tissue>
    </source>
</reference>
<reference key="4">
    <citation type="submission" date="2005-07" db="EMBL/GenBank/DDBJ databases">
        <authorList>
            <person name="Mural R.J."/>
            <person name="Adams M.D."/>
            <person name="Myers E.W."/>
            <person name="Smith H.O."/>
            <person name="Venter J.C."/>
        </authorList>
    </citation>
    <scope>NUCLEOTIDE SEQUENCE [LARGE SCALE GENOMIC DNA]</scope>
</reference>
<reference key="5">
    <citation type="journal article" date="2004" name="Genome Res.">
        <title>The status, quality, and expansion of the NIH full-length cDNA project: the Mammalian Gene Collection (MGC).</title>
        <authorList>
            <consortium name="The MGC Project Team"/>
        </authorList>
    </citation>
    <scope>NUCLEOTIDE SEQUENCE [LARGE SCALE MRNA]</scope>
    <source>
        <strain>Czech II</strain>
        <tissue>Mammary gland</tissue>
    </source>
</reference>
<reference key="6">
    <citation type="journal article" date="1988" name="J. Immunol.">
        <title>Characterization of murine IL-1 beta. Isolation, expression, and purification.</title>
        <authorList>
            <person name="Huang J.J."/>
            <person name="Newton R.C."/>
            <person name="Rutledge S.J."/>
            <person name="Horuk R."/>
            <person name="Matthew J.B."/>
            <person name="Covington M."/>
            <person name="Lin Y."/>
        </authorList>
    </citation>
    <scope>PROTEIN SEQUENCE OF 118-139</scope>
</reference>
<reference key="7">
    <citation type="journal article" date="2006" name="Nature">
        <title>Cryopyrin activates the inflammasome in response to toxins and ATP.</title>
        <authorList>
            <person name="Mariathasan S."/>
            <person name="Weiss D.S."/>
            <person name="Newton K."/>
            <person name="McBride J."/>
            <person name="O'Rourke K."/>
            <person name="Roose-Girma M."/>
            <person name="Lee W.P."/>
            <person name="Weinrauch Y."/>
            <person name="Monack D.M."/>
            <person name="Dixit V.M."/>
        </authorList>
    </citation>
    <scope>TISSUE SPECIFICITY</scope>
    <scope>INDUCTION BY LPS</scope>
    <scope>MISCELLANEOUS</scope>
</reference>
<reference key="8">
    <citation type="journal article" date="2007" name="J. Cell Sci.">
        <title>Caspase-1-dependent processing of pro-interleukin-1beta is cytosolic and precedes cell death.</title>
        <authorList>
            <person name="Brough D."/>
            <person name="Rothwell N.J."/>
        </authorList>
    </citation>
    <scope>SUBCELLULAR LOCATION</scope>
    <scope>INDUCTION BY LPS</scope>
    <scope>MISCELLANEOUS</scope>
</reference>
<reference key="9">
    <citation type="journal article" date="2007" name="J. Immunol.">
        <title>Nonclassical IL-1 beta secretion stimulated by P2X7 receptors is dependent on inflammasome activation and correlated with exosome release in murine macrophages.</title>
        <authorList>
            <person name="Qu Y."/>
            <person name="Franchi L."/>
            <person name="Nunez G."/>
            <person name="Dubyak G.R."/>
        </authorList>
    </citation>
    <scope>SUBCELLULAR LOCATION</scope>
    <scope>INDUCTION BY LPS</scope>
    <scope>MISCELLANEOUS</scope>
</reference>
<reference key="10">
    <citation type="journal article" date="1991" name="J. Struct. Biol.">
        <title>The structure of murine interleukin-1 beta at 2.8-A resolution.</title>
        <authorList>
            <person name="van Oostrum J."/>
            <person name="Priestle J.P."/>
            <person name="Gruetter M.G."/>
            <person name="Schmitz A."/>
        </authorList>
    </citation>
    <scope>X-RAY CRYSTALLOGRAPHY (2.0 ANGSTROMS)</scope>
</reference>
<proteinExistence type="evidence at protein level"/>
<accession>P10749</accession>
<accession>Q2M4J6</accession>
<comment type="function">
    <text evidence="1">Potent pro-inflammatory cytokine. Initially discovered as the major endogenous pyrogen, induces prostaglandin synthesis, neutrophil influx and activation, T-cell activation and cytokine production, B-cell activation and antibody production, and fibroblast proliferation and collagen production. Promotes Th17 differentiation of T-cells. Synergizes with IL12/interleukin-12 to induce IFNG synthesis from T-helper 1 (Th1) cells. Plays a role in angiogenesis by inducing VEGF production synergistically with TNF and IL6. Involved in transduction of inflammation downstream of pyroptosis: its mature form is specifically released in the extracellular milieu by passing through the gasdermin-D (GSDMD) pore.</text>
</comment>
<comment type="subunit">
    <text evidence="1">Monomer. Interacts with MEFV. Interacts with integrins ITGAV:ITGBV and ITGA5:ITGB1; integrin-binding is required for IL1B signaling. Interacts with cargo receptor TMED10; the interaction is direct and is required for the secretion of IL1B mature form (By similarity). Interacts with HSP90AB1; the interaction facilitates cargo translocation into the ERGIC (By similarity). Interacts with HSP90B1; the interaction facilitates cargo translocation into the ERGIC (By similarity).</text>
</comment>
<comment type="subcellular location">
    <subcellularLocation>
        <location evidence="3">Cytoplasm</location>
        <location evidence="3">Cytosol</location>
    </subcellularLocation>
    <subcellularLocation>
        <location evidence="3 4">Secreted</location>
    </subcellularLocation>
    <subcellularLocation>
        <location evidence="1">Lysosome</location>
    </subcellularLocation>
    <subcellularLocation>
        <location evidence="4">Secreted</location>
        <location evidence="4">Extracellular exosome</location>
    </subcellularLocation>
    <text evidence="1">The precursor is cytosolic. In response to inflammasome-activating signals, such as ATP for NLRP3 inflammasome or bacterial flagellin for NLRC4 inflammasome, cleaved and secreted. Mature form is secreted and released in the extracellular milieu by passing through the gasdermin-D (GSDMD) pore. In contrast, the precursor form is not released, due to the presence of an acidic region that is proteolytically removed by CASP1 during maturation. The secretion is dependent on protein unfolding and facilitated by the cargo receptor TMED10.</text>
</comment>
<comment type="tissue specificity">
    <text evidence="2 3 4">Expressed in activated macrophages (at protein level).</text>
</comment>
<comment type="induction">
    <text evidence="2 3 4">By LPS.</text>
</comment>
<comment type="miscellaneous">
    <text evidence="3 4">IL1B production occurs in 2 steps, each being controlled by different stimuli. First, inflammatory signals, such as LPS, stimulate the synthesis and promote the accumulation of cytosolic stores of pro-IL1B (priming). Then additional signals are required for inflammasome assembly, leading to CASP1 activation, pro-IL1B processing and eventually secretion of the active cytokine. IL1B processing and secretion are temporarily associated.</text>
</comment>
<comment type="similarity">
    <text evidence="6">Belongs to the IL-1 family.</text>
</comment>
<gene>
    <name type="primary">Il1b</name>
</gene>